<sequence length="699" mass="81800">MDNEEVNEECMRLFFKNARAHLDKHLTSRLTCDENAYITFRCFLDGIHRKSTRFLEELLLKQENMYHNNNYERINDSVIPLVLKLLWLQIHEPTLQWFEHWFHDIMRLSNRRKFRVFRIFQKKMIQFFKITHRYYYDIIEHLCAKYDMNSVISNALFAKLNLMQYTDGLSTHEKIILNTSNPLTFSIVISLQRCVINLGSTHFYKTLLNKPSNKPKSVEGFEKSIRYLNIASLYLPAVGDTYFQRAKIYLITGKFSLYFFELVRGALVRIPSKCALNNLKDFILTPDFPERRRLMKKLAILVSKDLKGEKSFFEGQIVLQFLSIVEHTLVPQSWNASRASNCWLLKEHLQMAALKYHSGNINVILENLAATMGSFDLMFTTRKSKEQKNKLKYADLSERQVFFLDLSFDFIANIIDVVIKPSWQKNMEDFRYLAIIRLLMCWIKSYRSILQYTHRHRKFCTSFALLLNDLINSPLNCSGNIYSHRPKRSYLFREDIIFREFSCINFALTDFNDDYVYDSPDMINNIIGCPTLTKVLSPKEECVLRIRSIIFSGMKFLEKNDTGVIWNASKYKFDLISPNIKIKRQIALSEISSKINVKTQQERVVSSRKVEAKRDEQQRKRAGKIAVTELEKQFANVRRTKKLSPLPEKDGVSSELVKHAASRGRKTITGPLSSDFLSYPDEAIDADEDITVQVPDTPT</sequence>
<evidence type="ECO:0000256" key="1">
    <source>
        <dbReference type="SAM" id="MobiDB-lite"/>
    </source>
</evidence>
<evidence type="ECO:0000269" key="2">
    <source>
    </source>
</evidence>
<evidence type="ECO:0000269" key="3">
    <source>
    </source>
</evidence>
<evidence type="ECO:0000305" key="4"/>
<keyword id="KW-0158">Chromosome</keyword>
<keyword id="KW-0238">DNA-binding</keyword>
<keyword id="KW-0539">Nucleus</keyword>
<keyword id="KW-1185">Reference proteome</keyword>
<keyword id="KW-0779">Telomere</keyword>
<name>EST1_YEAST</name>
<accession>P17214</accession>
<accession>D6VYN3</accession>
<accession>Q05997</accession>
<proteinExistence type="evidence at protein level"/>
<dbReference type="EMBL" id="J04849">
    <property type="protein sequence ID" value="AAA66908.1"/>
    <property type="molecule type" value="Genomic_DNA"/>
</dbReference>
<dbReference type="EMBL" id="U19027">
    <property type="protein sequence ID" value="AAB67418.1"/>
    <property type="molecule type" value="Genomic_DNA"/>
</dbReference>
<dbReference type="EMBL" id="BK006945">
    <property type="protein sequence ID" value="DAA09549.1"/>
    <property type="molecule type" value="Genomic_DNA"/>
</dbReference>
<dbReference type="PIR" id="S51454">
    <property type="entry name" value="S51454"/>
</dbReference>
<dbReference type="RefSeq" id="NP_013334.1">
    <property type="nucleotide sequence ID" value="NM_001182120.1"/>
</dbReference>
<dbReference type="SMR" id="P17214"/>
<dbReference type="BioGRID" id="31502">
    <property type="interactions" value="718"/>
</dbReference>
<dbReference type="ComplexPortal" id="CPX-3298">
    <property type="entry name" value="Telomerase holoenzyme complex"/>
</dbReference>
<dbReference type="DIP" id="DIP-1306N"/>
<dbReference type="FunCoup" id="P17214">
    <property type="interactions" value="180"/>
</dbReference>
<dbReference type="IntAct" id="P17214">
    <property type="interactions" value="36"/>
</dbReference>
<dbReference type="MINT" id="P17214"/>
<dbReference type="STRING" id="4932.YLR233C"/>
<dbReference type="iPTMnet" id="P17214"/>
<dbReference type="PaxDb" id="4932-YLR233C"/>
<dbReference type="PeptideAtlas" id="P17214"/>
<dbReference type="EnsemblFungi" id="YLR233C_mRNA">
    <property type="protein sequence ID" value="YLR233C"/>
    <property type="gene ID" value="YLR233C"/>
</dbReference>
<dbReference type="GeneID" id="850934"/>
<dbReference type="KEGG" id="sce:YLR233C"/>
<dbReference type="AGR" id="SGD:S000004223"/>
<dbReference type="SGD" id="S000004223">
    <property type="gene designation" value="EST1"/>
</dbReference>
<dbReference type="VEuPathDB" id="FungiDB:YLR233C"/>
<dbReference type="eggNOG" id="KOG2162">
    <property type="taxonomic scope" value="Eukaryota"/>
</dbReference>
<dbReference type="GeneTree" id="ENSGT00940000176623"/>
<dbReference type="HOGENOM" id="CLU_394378_0_0_1"/>
<dbReference type="InParanoid" id="P17214"/>
<dbReference type="OMA" id="EFSCVNF"/>
<dbReference type="OrthoDB" id="69928at2759"/>
<dbReference type="BioCyc" id="YEAST:G3O-32344-MONOMER"/>
<dbReference type="Reactome" id="R-SCE-975957">
    <property type="pathway name" value="Nonsense Mediated Decay (NMD) enhanced by the Exon Junction Complex (EJC)"/>
</dbReference>
<dbReference type="BioGRID-ORCS" id="850934">
    <property type="hits" value="0 hits in 10 CRISPR screens"/>
</dbReference>
<dbReference type="PRO" id="PR:P17214"/>
<dbReference type="Proteomes" id="UP000002311">
    <property type="component" value="Chromosome XII"/>
</dbReference>
<dbReference type="RNAct" id="P17214">
    <property type="molecule type" value="protein"/>
</dbReference>
<dbReference type="GO" id="GO:0000781">
    <property type="term" value="C:chromosome, telomeric region"/>
    <property type="evidence" value="ECO:0007669"/>
    <property type="project" value="UniProtKB-SubCell"/>
</dbReference>
<dbReference type="GO" id="GO:0005730">
    <property type="term" value="C:nucleolus"/>
    <property type="evidence" value="ECO:0000314"/>
    <property type="project" value="SGD"/>
</dbReference>
<dbReference type="GO" id="GO:0005634">
    <property type="term" value="C:nucleus"/>
    <property type="evidence" value="ECO:0000314"/>
    <property type="project" value="SGD"/>
</dbReference>
<dbReference type="GO" id="GO:0005697">
    <property type="term" value="C:telomerase holoenzyme complex"/>
    <property type="evidence" value="ECO:0000314"/>
    <property type="project" value="SGD"/>
</dbReference>
<dbReference type="GO" id="GO:0003723">
    <property type="term" value="F:RNA binding"/>
    <property type="evidence" value="ECO:0000353"/>
    <property type="project" value="SGD"/>
</dbReference>
<dbReference type="GO" id="GO:0003697">
    <property type="term" value="F:single-stranded DNA binding"/>
    <property type="evidence" value="ECO:0000314"/>
    <property type="project" value="SGD"/>
</dbReference>
<dbReference type="GO" id="GO:0070034">
    <property type="term" value="F:telomerase RNA binding"/>
    <property type="evidence" value="ECO:0000318"/>
    <property type="project" value="GO_Central"/>
</dbReference>
<dbReference type="GO" id="GO:0042162">
    <property type="term" value="F:telomeric DNA binding"/>
    <property type="evidence" value="ECO:0000314"/>
    <property type="project" value="SGD"/>
</dbReference>
<dbReference type="GO" id="GO:0071919">
    <property type="term" value="P:G-quadruplex DNA formation"/>
    <property type="evidence" value="ECO:0000314"/>
    <property type="project" value="SGD"/>
</dbReference>
<dbReference type="GO" id="GO:0000184">
    <property type="term" value="P:nuclear-transcribed mRNA catabolic process, nonsense-mediated decay"/>
    <property type="evidence" value="ECO:0000318"/>
    <property type="project" value="GO_Central"/>
</dbReference>
<dbReference type="GO" id="GO:0032210">
    <property type="term" value="P:regulation of telomere maintenance via telomerase"/>
    <property type="evidence" value="ECO:0000314"/>
    <property type="project" value="SGD"/>
</dbReference>
<dbReference type="GO" id="GO:0000723">
    <property type="term" value="P:telomere maintenance"/>
    <property type="evidence" value="ECO:0000315"/>
    <property type="project" value="SGD"/>
</dbReference>
<dbReference type="GO" id="GO:0007004">
    <property type="term" value="P:telomere maintenance via telomerase"/>
    <property type="evidence" value="ECO:0000314"/>
    <property type="project" value="SGD"/>
</dbReference>
<dbReference type="Gene3D" id="1.25.40.10">
    <property type="entry name" value="Tetratricopeptide repeat domain"/>
    <property type="match status" value="1"/>
</dbReference>
<dbReference type="InterPro" id="IPR018834">
    <property type="entry name" value="DNA/RNA-bd_Est1-type"/>
</dbReference>
<dbReference type="InterPro" id="IPR019458">
    <property type="entry name" value="Est1-like_N"/>
</dbReference>
<dbReference type="InterPro" id="IPR045153">
    <property type="entry name" value="Est1/Ebs1-like"/>
</dbReference>
<dbReference type="InterPro" id="IPR011990">
    <property type="entry name" value="TPR-like_helical_dom_sf"/>
</dbReference>
<dbReference type="PANTHER" id="PTHR15696:SF37">
    <property type="entry name" value="NONSENSE-MEDIATED MRNA DECAY FACTOR EBS1-RELATED"/>
    <property type="match status" value="1"/>
</dbReference>
<dbReference type="PANTHER" id="PTHR15696">
    <property type="entry name" value="SMG-7 SUPPRESSOR WITH MORPHOLOGICAL EFFECT ON GENITALIA PROTEIN 7"/>
    <property type="match status" value="1"/>
</dbReference>
<dbReference type="Pfam" id="PF10374">
    <property type="entry name" value="EST1"/>
    <property type="match status" value="1"/>
</dbReference>
<dbReference type="Pfam" id="PF10373">
    <property type="entry name" value="EST1_DNA_bind"/>
    <property type="match status" value="1"/>
</dbReference>
<dbReference type="SUPFAM" id="SSF48452">
    <property type="entry name" value="TPR-like"/>
    <property type="match status" value="1"/>
</dbReference>
<feature type="chain" id="PRO_0000087072" description="Telomere elongation protein EST1">
    <location>
        <begin position="1"/>
        <end position="699"/>
    </location>
</feature>
<feature type="region of interest" description="Disordered" evidence="1">
    <location>
        <begin position="641"/>
        <end position="663"/>
    </location>
</feature>
<feature type="compositionally biased region" description="Basic and acidic residues" evidence="1">
    <location>
        <begin position="647"/>
        <end position="658"/>
    </location>
</feature>
<feature type="sequence conflict" description="In Ref. 1; AAA66908." evidence="4" ref="1">
    <original>R</original>
    <variation>C</variation>
    <location>
        <position position="49"/>
    </location>
</feature>
<feature type="sequence conflict" description="In Ref. 1; AAA66908." evidence="4" ref="1">
    <original>L</original>
    <variation>V</variation>
    <location>
        <position position="85"/>
    </location>
</feature>
<feature type="sequence conflict" description="In Ref. 1; AAA66908." evidence="4" ref="1">
    <original>D</original>
    <variation>N</variation>
    <location>
        <position position="287"/>
    </location>
</feature>
<feature type="sequence conflict" description="In Ref. 1; AAA66908." evidence="4" ref="1">
    <original>M</original>
    <variation>I</variation>
    <location>
        <position position="351"/>
    </location>
</feature>
<feature type="sequence conflict" description="In Ref. 1; AAA66908." evidence="4" ref="1">
    <original>V</original>
    <variation>M</variation>
    <location>
        <position position="535"/>
    </location>
</feature>
<feature type="sequence conflict" description="In Ref. 1; AAA66908." evidence="4" ref="1">
    <original>Y</original>
    <variation>H</variation>
    <location>
        <position position="571"/>
    </location>
</feature>
<feature type="sequence conflict" description="In Ref. 1; AAA66908." evidence="4" ref="1">
    <original>N</original>
    <variation>D</variation>
    <location>
        <position position="579"/>
    </location>
</feature>
<feature type="sequence conflict" description="In Ref. 1; AAA66908." evidence="4" ref="1">
    <original>I</original>
    <variation>M</variation>
    <location>
        <position position="582"/>
    </location>
</feature>
<feature type="sequence conflict" description="In Ref. 1; AAA66908." evidence="4" ref="1">
    <original>R</original>
    <variation>K</variation>
    <location>
        <position position="665"/>
    </location>
</feature>
<reference key="1">
    <citation type="journal article" date="1989" name="Cell">
        <title>A mutant with a defect in telomere elongation leads to senescence in yeast.</title>
        <authorList>
            <person name="Lundblad V."/>
            <person name="Szostak J.W."/>
        </authorList>
    </citation>
    <scope>NUCLEOTIDE SEQUENCE [GENOMIC DNA]</scope>
</reference>
<reference key="2">
    <citation type="journal article" date="1997" name="Nature">
        <title>The nucleotide sequence of Saccharomyces cerevisiae chromosome XII.</title>
        <authorList>
            <person name="Johnston M."/>
            <person name="Hillier L.W."/>
            <person name="Riles L."/>
            <person name="Albermann K."/>
            <person name="Andre B."/>
            <person name="Ansorge W."/>
            <person name="Benes V."/>
            <person name="Brueckner M."/>
            <person name="Delius H."/>
            <person name="Dubois E."/>
            <person name="Duesterhoeft A."/>
            <person name="Entian K.-D."/>
            <person name="Floeth M."/>
            <person name="Goffeau A."/>
            <person name="Hebling U."/>
            <person name="Heumann K."/>
            <person name="Heuss-Neitzel D."/>
            <person name="Hilbert H."/>
            <person name="Hilger F."/>
            <person name="Kleine K."/>
            <person name="Koetter P."/>
            <person name="Louis E.J."/>
            <person name="Messenguy F."/>
            <person name="Mewes H.-W."/>
            <person name="Miosga T."/>
            <person name="Moestl D."/>
            <person name="Mueller-Auer S."/>
            <person name="Nentwich U."/>
            <person name="Obermaier B."/>
            <person name="Piravandi E."/>
            <person name="Pohl T.M."/>
            <person name="Portetelle D."/>
            <person name="Purnelle B."/>
            <person name="Rechmann S."/>
            <person name="Rieger M."/>
            <person name="Rinke M."/>
            <person name="Rose M."/>
            <person name="Scharfe M."/>
            <person name="Scherens B."/>
            <person name="Scholler P."/>
            <person name="Schwager C."/>
            <person name="Schwarz S."/>
            <person name="Underwood A.P."/>
            <person name="Urrestarazu L.A."/>
            <person name="Vandenbol M."/>
            <person name="Verhasselt P."/>
            <person name="Vierendeels F."/>
            <person name="Voet M."/>
            <person name="Volckaert G."/>
            <person name="Voss H."/>
            <person name="Wambutt R."/>
            <person name="Wedler E."/>
            <person name="Wedler H."/>
            <person name="Zimmermann F.K."/>
            <person name="Zollner A."/>
            <person name="Hani J."/>
            <person name="Hoheisel J.D."/>
        </authorList>
    </citation>
    <scope>NUCLEOTIDE SEQUENCE [LARGE SCALE GENOMIC DNA]</scope>
    <source>
        <strain>ATCC 204508 / S288c</strain>
    </source>
</reference>
<reference key="3">
    <citation type="journal article" date="2014" name="G3 (Bethesda)">
        <title>The reference genome sequence of Saccharomyces cerevisiae: Then and now.</title>
        <authorList>
            <person name="Engel S.R."/>
            <person name="Dietrich F.S."/>
            <person name="Fisk D.G."/>
            <person name="Binkley G."/>
            <person name="Balakrishnan R."/>
            <person name="Costanzo M.C."/>
            <person name="Dwight S.S."/>
            <person name="Hitz B.C."/>
            <person name="Karra K."/>
            <person name="Nash R.S."/>
            <person name="Weng S."/>
            <person name="Wong E.D."/>
            <person name="Lloyd P."/>
            <person name="Skrzypek M.S."/>
            <person name="Miyasato S.R."/>
            <person name="Simison M."/>
            <person name="Cherry J.M."/>
        </authorList>
    </citation>
    <scope>GENOME REANNOTATION</scope>
    <source>
        <strain>ATCC 204508 / S288c</strain>
    </source>
</reference>
<reference key="4">
    <citation type="journal article" date="1990" name="Cell">
        <title>RNA-dependent polymerase motifs in EST1: tentative identification of a protein component of an essential yeast telomerase.</title>
        <authorList>
            <person name="Lundblad V."/>
            <person name="Blackburn E.H."/>
        </authorList>
    </citation>
    <scope>PUTATIVE SIMILARITY TO REVERSE TRANSCRIPTASES</scope>
</reference>
<reference key="5">
    <citation type="journal article" date="1991" name="New Biol.">
        <title>Playing with blocks: some pitfalls of forcing multiple alignments.</title>
        <authorList>
            <person name="Henikoff S."/>
        </authorList>
    </citation>
    <scope>SHOWS THAT THIS SIMILARITY IS DOUBTFUL</scope>
</reference>
<reference key="6">
    <citation type="journal article" date="2001" name="Mol. Cell. Biol.">
        <title>New function of CDC13 in positive telomere length regulation.</title>
        <authorList>
            <person name="Meier B."/>
            <person name="Driller L."/>
            <person name="Jaklin S."/>
            <person name="Feldmann H.M."/>
        </authorList>
    </citation>
    <scope>FUNCTION</scope>
    <scope>INTERACTION WITH CDC13</scope>
</reference>
<reference key="7">
    <citation type="journal article" date="2007" name="Cell Cycle">
        <title>The nuclear envelope and spindle pole body-associated Mps3 protein bind telomere regulators and function in telomere clustering.</title>
        <authorList>
            <person name="Antoniacci L.M."/>
            <person name="Kenna M.A."/>
            <person name="Skibbens R.V."/>
        </authorList>
    </citation>
    <scope>FUNCTION</scope>
    <scope>INTERACTION WITH MPS3</scope>
</reference>
<gene>
    <name type="primary">EST1</name>
    <name type="ordered locus">YLR233C</name>
    <name type="ORF">L8083.15</name>
</gene>
<protein>
    <recommendedName>
        <fullName>Telomere elongation protein EST1</fullName>
    </recommendedName>
    <alternativeName>
        <fullName>Ever shorter telomeres protein 1</fullName>
    </alternativeName>
</protein>
<organism>
    <name type="scientific">Saccharomyces cerevisiae (strain ATCC 204508 / S288c)</name>
    <name type="common">Baker's yeast</name>
    <dbReference type="NCBI Taxonomy" id="559292"/>
    <lineage>
        <taxon>Eukaryota</taxon>
        <taxon>Fungi</taxon>
        <taxon>Dikarya</taxon>
        <taxon>Ascomycota</taxon>
        <taxon>Saccharomycotina</taxon>
        <taxon>Saccharomycetes</taxon>
        <taxon>Saccharomycetales</taxon>
        <taxon>Saccharomycetaceae</taxon>
        <taxon>Saccharomyces</taxon>
    </lineage>
</organism>
<comment type="function">
    <text evidence="2 3">Directly involved in telomere replication. Associates with telomerase and during its interaction with CDC13, telomerase activity is promoted.</text>
</comment>
<comment type="subunit">
    <text evidence="2 3">Interacts with CDC13 and MPS3.</text>
</comment>
<comment type="interaction">
    <interactant intactId="EBI-6684">
        <id>P17214</id>
    </interactant>
    <interactant intactId="EBI-4187">
        <id>P32797</id>
        <label>CDC13</label>
    </interactant>
    <organismsDiffer>false</organismsDiffer>
    <experiments>3</experiments>
</comment>
<comment type="interaction">
    <interactant intactId="EBI-6684">
        <id>P17214</id>
    </interactant>
    <interactant intactId="EBI-3764464">
        <id>Q06163</id>
        <label>EST2</label>
    </interactant>
    <organismsDiffer>false</organismsDiffer>
    <experiments>4</experiments>
</comment>
<comment type="interaction">
    <interactant intactId="EBI-6684">
        <id>P17214</id>
    </interactant>
    <interactant intactId="EBI-25811">
        <id>P47069</id>
        <label>MPS3</label>
    </interactant>
    <organismsDiffer>false</organismsDiffer>
    <experiments>3</experiments>
</comment>
<comment type="subcellular location">
    <subcellularLocation>
        <location>Nucleus</location>
    </subcellularLocation>
    <subcellularLocation>
        <location evidence="4">Chromosome</location>
        <location evidence="4">Telomere</location>
    </subcellularLocation>
</comment>
<comment type="similarity">
    <text evidence="4">Belongs to the EST1 family.</text>
</comment>